<organism>
    <name type="scientific">Rhizobium leguminosarum bv. trifolii (strain WSM2304)</name>
    <dbReference type="NCBI Taxonomy" id="395492"/>
    <lineage>
        <taxon>Bacteria</taxon>
        <taxon>Pseudomonadati</taxon>
        <taxon>Pseudomonadota</taxon>
        <taxon>Alphaproteobacteria</taxon>
        <taxon>Hyphomicrobiales</taxon>
        <taxon>Rhizobiaceae</taxon>
        <taxon>Rhizobium/Agrobacterium group</taxon>
        <taxon>Rhizobium</taxon>
    </lineage>
</organism>
<evidence type="ECO:0000255" key="1">
    <source>
        <dbReference type="HAMAP-Rule" id="MF_00676"/>
    </source>
</evidence>
<accession>B5ZVD0</accession>
<reference key="1">
    <citation type="journal article" date="2010" name="Stand. Genomic Sci.">
        <title>Complete genome sequence of Rhizobium leguminosarum bv trifolii strain WSM2304, an effective microsymbiont of the South American clover Trifolium polymorphum.</title>
        <authorList>
            <person name="Reeve W."/>
            <person name="O'Hara G."/>
            <person name="Chain P."/>
            <person name="Ardley J."/>
            <person name="Brau L."/>
            <person name="Nandesena K."/>
            <person name="Tiwari R."/>
            <person name="Malfatti S."/>
            <person name="Kiss H."/>
            <person name="Lapidus A."/>
            <person name="Copeland A."/>
            <person name="Nolan M."/>
            <person name="Land M."/>
            <person name="Ivanova N."/>
            <person name="Mavromatis K."/>
            <person name="Markowitz V."/>
            <person name="Kyrpides N."/>
            <person name="Melino V."/>
            <person name="Denton M."/>
            <person name="Yates R."/>
            <person name="Howieson J."/>
        </authorList>
    </citation>
    <scope>NUCLEOTIDE SEQUENCE [LARGE SCALE GENOMIC DNA]</scope>
    <source>
        <strain>WSM2304</strain>
    </source>
</reference>
<keyword id="KW-1185">Reference proteome</keyword>
<feature type="chain" id="PRO_1000131628" description="UPF0260 protein Rleg2_0895">
    <location>
        <begin position="1"/>
        <end position="160"/>
    </location>
</feature>
<proteinExistence type="inferred from homology"/>
<gene>
    <name type="ordered locus">Rleg2_0895</name>
</gene>
<protein>
    <recommendedName>
        <fullName evidence="1">UPF0260 protein Rleg2_0895</fullName>
    </recommendedName>
</protein>
<dbReference type="EMBL" id="CP001191">
    <property type="protein sequence ID" value="ACI54189.1"/>
    <property type="molecule type" value="Genomic_DNA"/>
</dbReference>
<dbReference type="RefSeq" id="WP_012557045.1">
    <property type="nucleotide sequence ID" value="NC_011369.1"/>
</dbReference>
<dbReference type="STRING" id="395492.Rleg2_0895"/>
<dbReference type="KEGG" id="rlt:Rleg2_0895"/>
<dbReference type="eggNOG" id="COG2983">
    <property type="taxonomic scope" value="Bacteria"/>
</dbReference>
<dbReference type="HOGENOM" id="CLU_109769_0_1_5"/>
<dbReference type="Proteomes" id="UP000008330">
    <property type="component" value="Chromosome"/>
</dbReference>
<dbReference type="HAMAP" id="MF_00676">
    <property type="entry name" value="UPF0260"/>
    <property type="match status" value="1"/>
</dbReference>
<dbReference type="InterPro" id="IPR005358">
    <property type="entry name" value="Puta_zinc/iron-chelating_dom"/>
</dbReference>
<dbReference type="InterPro" id="IPR008228">
    <property type="entry name" value="UCP006173"/>
</dbReference>
<dbReference type="NCBIfam" id="NF003501">
    <property type="entry name" value="PRK05170.1-5"/>
    <property type="match status" value="1"/>
</dbReference>
<dbReference type="NCBIfam" id="NF003507">
    <property type="entry name" value="PRK05170.2-5"/>
    <property type="match status" value="1"/>
</dbReference>
<dbReference type="PANTHER" id="PTHR37421">
    <property type="entry name" value="UPF0260 PROTEIN YCGN"/>
    <property type="match status" value="1"/>
</dbReference>
<dbReference type="PANTHER" id="PTHR37421:SF1">
    <property type="entry name" value="UPF0260 PROTEIN YCGN"/>
    <property type="match status" value="1"/>
</dbReference>
<dbReference type="Pfam" id="PF03692">
    <property type="entry name" value="CxxCxxCC"/>
    <property type="match status" value="1"/>
</dbReference>
<dbReference type="PIRSF" id="PIRSF006173">
    <property type="entry name" value="UCP006173"/>
    <property type="match status" value="1"/>
</dbReference>
<comment type="similarity">
    <text evidence="1">Belongs to the UPF0260 family.</text>
</comment>
<name>Y895_RHILW</name>
<sequence>MNDLPFWKRKTLAEMTVAEWESLCDGCGLCCLNKIEEWDSGDIYFTSVSCKLLDGESCRCSSYENRWDFVPDCVQLTKENVPDIAWLPPTCGYRLVNEGRDLYWWHPLISGDPETVHAAGISARGRTINENEIDIDDLEDYVVDWPLTVGEEKDEEEEEA</sequence>